<feature type="initiator methionine" description="Removed" evidence="3">
    <location>
        <position position="1"/>
    </location>
</feature>
<feature type="chain" id="PRO_0000086450" description="Nuclear receptor-binding protein">
    <location>
        <begin position="2"/>
        <end position="535"/>
    </location>
</feature>
<feature type="domain" description="Protein kinase" evidence="4">
    <location>
        <begin position="68"/>
        <end position="327"/>
    </location>
</feature>
<feature type="region of interest" description="Disordered" evidence="5">
    <location>
        <begin position="1"/>
        <end position="70"/>
    </location>
</feature>
<feature type="region of interest" description="Disordered" evidence="5">
    <location>
        <begin position="409"/>
        <end position="437"/>
    </location>
</feature>
<feature type="compositionally biased region" description="Polar residues" evidence="5">
    <location>
        <begin position="1"/>
        <end position="26"/>
    </location>
</feature>
<feature type="compositionally biased region" description="Low complexity" evidence="5">
    <location>
        <begin position="27"/>
        <end position="42"/>
    </location>
</feature>
<feature type="compositionally biased region" description="Acidic residues" evidence="5">
    <location>
        <begin position="43"/>
        <end position="57"/>
    </location>
</feature>
<feature type="compositionally biased region" description="Low complexity" evidence="5">
    <location>
        <begin position="414"/>
        <end position="432"/>
    </location>
</feature>
<feature type="modified residue" description="N-acetylserine" evidence="3">
    <location>
        <position position="2"/>
    </location>
</feature>
<feature type="modified residue" description="Phosphoserine" evidence="3">
    <location>
        <position position="2"/>
    </location>
</feature>
<feature type="modified residue" description="Phosphothreonine" evidence="2">
    <location>
        <position position="431"/>
    </location>
</feature>
<feature type="modified residue" description="Phosphothreonine" evidence="3">
    <location>
        <position position="433"/>
    </location>
</feature>
<reference evidence="6" key="1">
    <citation type="submission" date="2005-06" db="EMBL/GenBank/DDBJ databases">
        <title>DNA sequences of macaque genes expressed in brain or testis and its evolutionary implications.</title>
        <authorList>
            <consortium name="International consortium for macaque cDNA sequencing and analysis"/>
        </authorList>
    </citation>
    <scope>NUCLEOTIDE SEQUENCE [LARGE SCALE MRNA]</scope>
    <source>
        <tissue>Testis</tissue>
    </source>
</reference>
<organism>
    <name type="scientific">Macaca fascicularis</name>
    <name type="common">Crab-eating macaque</name>
    <name type="synonym">Cynomolgus monkey</name>
    <dbReference type="NCBI Taxonomy" id="9541"/>
    <lineage>
        <taxon>Eukaryota</taxon>
        <taxon>Metazoa</taxon>
        <taxon>Chordata</taxon>
        <taxon>Craniata</taxon>
        <taxon>Vertebrata</taxon>
        <taxon>Euteleostomi</taxon>
        <taxon>Mammalia</taxon>
        <taxon>Eutheria</taxon>
        <taxon>Euarchontoglires</taxon>
        <taxon>Primates</taxon>
        <taxon>Haplorrhini</taxon>
        <taxon>Catarrhini</taxon>
        <taxon>Cercopithecidae</taxon>
        <taxon>Cercopithecinae</taxon>
        <taxon>Macaca</taxon>
    </lineage>
</organism>
<comment type="function">
    <text evidence="2 3">Required for embryonic development (By similarity). Plays a role in intestinal epithelial cell fate and proliferation, thereby involved in the architectural development of the intestine potentially via the regulation of Wnt-responsive genes (By similarity). May play a role in subcellular trafficking between the endoplasmic reticulum and Golgi apparatus through interactions with the Rho-type GTPases (By similarity).</text>
</comment>
<comment type="subunit">
    <text evidence="2 3">Homodimer (By similarity). Binds to MLF1, recruiting a serine kinase which phosphorylates both itself and MLF1 (By similarity). Phosphorylated MLF1 binds to YWHAZ and is retained in the cytoplasm (By similarity). Interacts with ELOC/TCEB1, ELOB/TCEB2, TSC22D2 and TSC22D4 (By similarity). Interacts with the Elongin BC E3 ubiquitin ligase complex via its interaction with ELOB/TCEB2 and ELOC/TCEB1 (By similarity). Interacts with SALL4 (By similarity).</text>
</comment>
<comment type="subcellular location">
    <subcellularLocation>
        <location evidence="1">Cytoplasm</location>
        <location evidence="1">Cell cortex</location>
    </subcellularLocation>
    <subcellularLocation>
        <location evidence="1">Endomembrane system</location>
    </subcellularLocation>
    <subcellularLocation>
        <location evidence="1">Cell projection</location>
        <location evidence="1">Lamellipodium</location>
    </subcellularLocation>
    <text evidence="1">Colocalizes with activated RAC3 to endomembranes and at the cell periphery in lamellipodia.</text>
</comment>
<comment type="domain">
    <text evidence="4">The protein kinase domain is predicted to be catalytically inactive.</text>
</comment>
<comment type="similarity">
    <text evidence="4">Belongs to the protein kinase superfamily. Ser/Thr protein kinase family.</text>
</comment>
<proteinExistence type="evidence at transcript level"/>
<protein>
    <recommendedName>
        <fullName>Nuclear receptor-binding protein</fullName>
    </recommendedName>
</protein>
<accession>Q4R8X0</accession>
<dbReference type="EMBL" id="AB168327">
    <property type="protein sequence ID" value="BAE00451.1"/>
    <property type="molecule type" value="mRNA"/>
</dbReference>
<dbReference type="EMBL" id="AB169835">
    <property type="protein sequence ID" value="BAE01916.1"/>
    <property type="molecule type" value="mRNA"/>
</dbReference>
<dbReference type="RefSeq" id="XP_005576331.1">
    <property type="nucleotide sequence ID" value="XM_005576274.4"/>
</dbReference>
<dbReference type="SMR" id="Q4R8X0"/>
<dbReference type="STRING" id="9541.ENSMFAP00000017028"/>
<dbReference type="Ensembl" id="ENSMFAT00000067571.2">
    <property type="protein sequence ID" value="ENSMFAP00000017031.1"/>
    <property type="gene ID" value="ENSMFAG00000031403.2"/>
</dbReference>
<dbReference type="GeneID" id="101866221"/>
<dbReference type="KEGG" id="mcf:101866221"/>
<dbReference type="CTD" id="29959"/>
<dbReference type="VEuPathDB" id="HostDB:ENSMFAG00000031403"/>
<dbReference type="eggNOG" id="KOG1266">
    <property type="taxonomic scope" value="Eukaryota"/>
</dbReference>
<dbReference type="GeneTree" id="ENSGT00940000155605"/>
<dbReference type="Proteomes" id="UP000233100">
    <property type="component" value="Chromosome 13"/>
</dbReference>
<dbReference type="Bgee" id="ENSMFAG00000031403">
    <property type="expression patterns" value="Expressed in skeletal muscle tissue and 13 other cell types or tissues"/>
</dbReference>
<dbReference type="GO" id="GO:0005938">
    <property type="term" value="C:cell cortex"/>
    <property type="evidence" value="ECO:0007669"/>
    <property type="project" value="UniProtKB-SubCell"/>
</dbReference>
<dbReference type="GO" id="GO:0012505">
    <property type="term" value="C:endomembrane system"/>
    <property type="evidence" value="ECO:0000250"/>
    <property type="project" value="UniProtKB"/>
</dbReference>
<dbReference type="GO" id="GO:0030027">
    <property type="term" value="C:lamellipodium"/>
    <property type="evidence" value="ECO:0007669"/>
    <property type="project" value="UniProtKB-SubCell"/>
</dbReference>
<dbReference type="GO" id="GO:0016020">
    <property type="term" value="C:membrane"/>
    <property type="evidence" value="ECO:0007669"/>
    <property type="project" value="UniProtKB-KW"/>
</dbReference>
<dbReference type="GO" id="GO:0048471">
    <property type="term" value="C:perinuclear region of cytoplasm"/>
    <property type="evidence" value="ECO:0000250"/>
    <property type="project" value="UniProtKB"/>
</dbReference>
<dbReference type="GO" id="GO:0042803">
    <property type="term" value="F:protein homodimerization activity"/>
    <property type="evidence" value="ECO:0000250"/>
    <property type="project" value="UniProtKB"/>
</dbReference>
<dbReference type="GO" id="GO:0006888">
    <property type="term" value="P:endoplasmic reticulum to Golgi vesicle-mediated transport"/>
    <property type="evidence" value="ECO:0000250"/>
    <property type="project" value="UniProtKB"/>
</dbReference>
<dbReference type="CDD" id="cd14034">
    <property type="entry name" value="PK_NRBP1"/>
    <property type="match status" value="1"/>
</dbReference>
<dbReference type="FunFam" id="1.10.510.10:FF:000181">
    <property type="entry name" value="Nuclear receptor-binding protein 1"/>
    <property type="match status" value="1"/>
</dbReference>
<dbReference type="FunFam" id="3.30.200.20:FF:000098">
    <property type="entry name" value="Nuclear receptor-binding protein 1"/>
    <property type="match status" value="1"/>
</dbReference>
<dbReference type="Gene3D" id="3.30.200.20">
    <property type="entry name" value="Phosphorylase Kinase, domain 1"/>
    <property type="match status" value="1"/>
</dbReference>
<dbReference type="Gene3D" id="1.10.510.10">
    <property type="entry name" value="Transferase(Phosphotransferase) domain 1"/>
    <property type="match status" value="1"/>
</dbReference>
<dbReference type="InterPro" id="IPR011009">
    <property type="entry name" value="Kinase-like_dom_sf"/>
</dbReference>
<dbReference type="InterPro" id="IPR000719">
    <property type="entry name" value="Prot_kinase_dom"/>
</dbReference>
<dbReference type="InterPro" id="IPR050588">
    <property type="entry name" value="WNK_Ser-Thr_kinase"/>
</dbReference>
<dbReference type="PANTHER" id="PTHR13902">
    <property type="entry name" value="SERINE/THREONINE-PROTEIN KINASE WNK WITH NO LYSINE -RELATED"/>
    <property type="match status" value="1"/>
</dbReference>
<dbReference type="Pfam" id="PF00069">
    <property type="entry name" value="Pkinase"/>
    <property type="match status" value="1"/>
</dbReference>
<dbReference type="SUPFAM" id="SSF56112">
    <property type="entry name" value="Protein kinase-like (PK-like)"/>
    <property type="match status" value="1"/>
</dbReference>
<dbReference type="PROSITE" id="PS50011">
    <property type="entry name" value="PROTEIN_KINASE_DOM"/>
    <property type="match status" value="1"/>
</dbReference>
<gene>
    <name type="primary">NRBP1</name>
    <name type="ORF">QtsA-11263</name>
</gene>
<sequence>MSEGESQTVLSSGSDPKVESSSSAPGLTSVSPPVTSTTSAASPEEEEESEDESEILEESPCGRWQKRREEVNQRNVPGIDSAYLAMDTEEGVEVVWNEVQFSERKNYKLQEEKVRAVFDNLIQLEHLNIVKFHKYWADIKENKARVIFITEYMSSGSLKQFLKKTKKNHKTMNEKAWKRWCTQILSALSYLHSCDPPIIHGNLTCDTIFIQHNGLIKIGSVAPDTINNHVKTCREEQKNLHFFAPEYGEVTNVTTAVDIYSFGMCALEMAVLEIQGNGESSYVPQEAISSAIQLLEDPLQREFIQKCLQSEPARRPTARELLFHPALFEVPSLKLLAAHCIVGHQHMIPENALEEITKNMDTSAVLAEIPAGPGREPVQTLYSQSPALELDKFLEDVRNGIYPLTAFGLPRPQQPQQEEVTSPVVPPSVKTPTPEPAEVETRKVVLMQCNIESVEEGVKHHLTLLLKLEDKLNRHLSCDLMPNENIPELAAELVQLGFISEADQSRLTSLLEETLNKFNFARNSTLNSAAVTVSS</sequence>
<keyword id="KW-0007">Acetylation</keyword>
<keyword id="KW-0966">Cell projection</keyword>
<keyword id="KW-0963">Cytoplasm</keyword>
<keyword id="KW-0472">Membrane</keyword>
<keyword id="KW-0597">Phosphoprotein</keyword>
<keyword id="KW-1185">Reference proteome</keyword>
<name>NRBP_MACFA</name>
<evidence type="ECO:0000250" key="1"/>
<evidence type="ECO:0000250" key="2">
    <source>
        <dbReference type="UniProtKB" id="Q99J45"/>
    </source>
</evidence>
<evidence type="ECO:0000250" key="3">
    <source>
        <dbReference type="UniProtKB" id="Q9UHY1"/>
    </source>
</evidence>
<evidence type="ECO:0000255" key="4">
    <source>
        <dbReference type="PROSITE-ProRule" id="PRU00159"/>
    </source>
</evidence>
<evidence type="ECO:0000256" key="5">
    <source>
        <dbReference type="SAM" id="MobiDB-lite"/>
    </source>
</evidence>
<evidence type="ECO:0000312" key="6">
    <source>
        <dbReference type="EMBL" id="BAE00451.1"/>
    </source>
</evidence>